<evidence type="ECO:0000255" key="1">
    <source>
        <dbReference type="HAMAP-Rule" id="MF_01840"/>
    </source>
</evidence>
<feature type="chain" id="PRO_1000188413" description="Aerobic magnesium-protoporphyrin IX monomethyl ester [oxidative] cyclase">
    <location>
        <begin position="1"/>
        <end position="365"/>
    </location>
</feature>
<organism>
    <name type="scientific">Rhodopseudomonas palustris (strain TIE-1)</name>
    <dbReference type="NCBI Taxonomy" id="395960"/>
    <lineage>
        <taxon>Bacteria</taxon>
        <taxon>Pseudomonadati</taxon>
        <taxon>Pseudomonadota</taxon>
        <taxon>Alphaproteobacteria</taxon>
        <taxon>Hyphomicrobiales</taxon>
        <taxon>Nitrobacteraceae</taxon>
        <taxon>Rhodopseudomonas</taxon>
    </lineage>
</organism>
<accession>B3Q7D4</accession>
<reference key="1">
    <citation type="submission" date="2008-05" db="EMBL/GenBank/DDBJ databases">
        <title>Complete sequence of Rhodopseudomonas palustris TIE-1.</title>
        <authorList>
            <consortium name="US DOE Joint Genome Institute"/>
            <person name="Lucas S."/>
            <person name="Copeland A."/>
            <person name="Lapidus A."/>
            <person name="Glavina del Rio T."/>
            <person name="Dalin E."/>
            <person name="Tice H."/>
            <person name="Pitluck S."/>
            <person name="Chain P."/>
            <person name="Malfatti S."/>
            <person name="Shin M."/>
            <person name="Vergez L."/>
            <person name="Lang D."/>
            <person name="Schmutz J."/>
            <person name="Larimer F."/>
            <person name="Land M."/>
            <person name="Hauser L."/>
            <person name="Kyrpides N."/>
            <person name="Mikhailova N."/>
            <person name="Emerson D."/>
            <person name="Newman D.K."/>
            <person name="Roden E."/>
            <person name="Richardson P."/>
        </authorList>
    </citation>
    <scope>NUCLEOTIDE SEQUENCE [LARGE SCALE GENOMIC DNA]</scope>
    <source>
        <strain>TIE-1</strain>
    </source>
</reference>
<proteinExistence type="inferred from homology"/>
<sequence length="365" mass="42497">MIPMEGGAQGALRTRPDIKGSVDSLNIAKQDTILTPRFYTTDYAAMDKLDVSLVRAEWTAMMNELRADYNKSHFKKTDEFLNSDLDKLPPELRAEFKDFLVSSLTAEFSGCVLYAEIKKRIKNPEIRELFGLLSRDEARHAGFINEILKDHGIGVDLSFLTKVKKYTYFRPKFIFYATYLSEKIGYARYITIYRQMERHPERRFHPIFKWFERWCNDEFRHGEAFALLMRADPSLLSGVNKLWIRFFLLAVFSTMYVRDHMRPAFYEALGVDATDYGMQVFRITTEISKQVFPVTINLDDPRFLQNLERLRIAAEKIDRSHSQGLLGKLKRPFYAASAALAFGRLFLLPAKRNELPRVIGLRPAW</sequence>
<protein>
    <recommendedName>
        <fullName evidence="1">Aerobic magnesium-protoporphyrin IX monomethyl ester [oxidative] cyclase</fullName>
        <shortName evidence="1">Aerobic Mg-protoporphyrin IX monomethyl ester oxidative cyclase</shortName>
        <ecNumber evidence="1">1.14.13.81</ecNumber>
    </recommendedName>
</protein>
<keyword id="KW-0077">Bacteriochlorophyll biosynthesis</keyword>
<keyword id="KW-0149">Chlorophyll biosynthesis</keyword>
<keyword id="KW-0408">Iron</keyword>
<keyword id="KW-0479">Metal-binding</keyword>
<keyword id="KW-0521">NADP</keyword>
<keyword id="KW-0560">Oxidoreductase</keyword>
<keyword id="KW-0602">Photosynthesis</keyword>
<dbReference type="EC" id="1.14.13.81" evidence="1"/>
<dbReference type="EMBL" id="CP001096">
    <property type="protein sequence ID" value="ACF00268.1"/>
    <property type="molecule type" value="Genomic_DNA"/>
</dbReference>
<dbReference type="RefSeq" id="WP_012495162.1">
    <property type="nucleotide sequence ID" value="NC_011004.1"/>
</dbReference>
<dbReference type="SMR" id="B3Q7D4"/>
<dbReference type="KEGG" id="rpt:Rpal_1740"/>
<dbReference type="HOGENOM" id="CLU_048037_0_0_5"/>
<dbReference type="OrthoDB" id="141643at2"/>
<dbReference type="UniPathway" id="UPA00671"/>
<dbReference type="Proteomes" id="UP000001725">
    <property type="component" value="Chromosome"/>
</dbReference>
<dbReference type="GO" id="GO:0005506">
    <property type="term" value="F:iron ion binding"/>
    <property type="evidence" value="ECO:0007669"/>
    <property type="project" value="UniProtKB-UniRule"/>
</dbReference>
<dbReference type="GO" id="GO:0048529">
    <property type="term" value="F:magnesium-protoporphyrin IX monomethyl ester (oxidative) cyclase activity"/>
    <property type="evidence" value="ECO:0007669"/>
    <property type="project" value="UniProtKB-UniRule"/>
</dbReference>
<dbReference type="GO" id="GO:0036070">
    <property type="term" value="P:light-independent bacteriochlorophyll biosynthetic process"/>
    <property type="evidence" value="ECO:0007669"/>
    <property type="project" value="UniProtKB-UniRule"/>
</dbReference>
<dbReference type="GO" id="GO:0015979">
    <property type="term" value="P:photosynthesis"/>
    <property type="evidence" value="ECO:0007669"/>
    <property type="project" value="UniProtKB-UniRule"/>
</dbReference>
<dbReference type="CDD" id="cd01047">
    <property type="entry name" value="ACSF"/>
    <property type="match status" value="1"/>
</dbReference>
<dbReference type="HAMAP" id="MF_01840">
    <property type="entry name" value="AcsF"/>
    <property type="match status" value="1"/>
</dbReference>
<dbReference type="InterPro" id="IPR008434">
    <property type="entry name" value="AcsF"/>
</dbReference>
<dbReference type="InterPro" id="IPR009078">
    <property type="entry name" value="Ferritin-like_SF"/>
</dbReference>
<dbReference type="InterPro" id="IPR003251">
    <property type="entry name" value="Rr_diiron-bd_dom"/>
</dbReference>
<dbReference type="NCBIfam" id="TIGR02029">
    <property type="entry name" value="AcsF"/>
    <property type="match status" value="1"/>
</dbReference>
<dbReference type="NCBIfam" id="NF010172">
    <property type="entry name" value="PRK13654.1"/>
    <property type="match status" value="1"/>
</dbReference>
<dbReference type="PANTHER" id="PTHR31053">
    <property type="entry name" value="MAGNESIUM-PROTOPORPHYRIN IX MONOMETHYL ESTER [OXIDATIVE] CYCLASE, CHLOROPLASTIC"/>
    <property type="match status" value="1"/>
</dbReference>
<dbReference type="PANTHER" id="PTHR31053:SF2">
    <property type="entry name" value="MAGNESIUM-PROTOPORPHYRIN IX MONOMETHYL ESTER [OXIDATIVE] CYCLASE, CHLOROPLASTIC"/>
    <property type="match status" value="1"/>
</dbReference>
<dbReference type="Pfam" id="PF02915">
    <property type="entry name" value="Rubrerythrin"/>
    <property type="match status" value="1"/>
</dbReference>
<dbReference type="SUPFAM" id="SSF47240">
    <property type="entry name" value="Ferritin-like"/>
    <property type="match status" value="1"/>
</dbReference>
<gene>
    <name evidence="1" type="primary">acsF</name>
    <name type="ordered locus">Rpal_1740</name>
</gene>
<comment type="function">
    <text evidence="1">Catalyzes the formation of the isocyclic ring in chlorophyll biosynthesis. Mediates the cyclase reaction, which results in the formation of divinylprotochlorophyllide (Pchlide) characteristic of all chlorophylls from magnesium-protoporphyrin IX 13-monomethyl ester (MgPMME).</text>
</comment>
<comment type="catalytic activity">
    <reaction evidence="1">
        <text>Mg-protoporphyrin IX 13-monomethyl ester + 3 NADPH + 3 O2 + 2 H(+) = 3,8-divinyl protochlorophyllide a + 3 NADP(+) + 5 H2O</text>
        <dbReference type="Rhea" id="RHEA:33235"/>
        <dbReference type="ChEBI" id="CHEBI:15377"/>
        <dbReference type="ChEBI" id="CHEBI:15378"/>
        <dbReference type="ChEBI" id="CHEBI:15379"/>
        <dbReference type="ChEBI" id="CHEBI:57783"/>
        <dbReference type="ChEBI" id="CHEBI:58349"/>
        <dbReference type="ChEBI" id="CHEBI:58632"/>
        <dbReference type="ChEBI" id="CHEBI:60491"/>
        <dbReference type="EC" id="1.14.13.81"/>
    </reaction>
</comment>
<comment type="cofactor">
    <cofactor evidence="1">
        <name>Fe cation</name>
        <dbReference type="ChEBI" id="CHEBI:24875"/>
    </cofactor>
</comment>
<comment type="pathway">
    <text evidence="1">Porphyrin-containing compound metabolism; bacteriochlorophyll biosynthesis (light-independent).</text>
</comment>
<comment type="similarity">
    <text evidence="1">Belongs to the AcsF family.</text>
</comment>
<name>ACSF_RHOPT</name>